<accession>D3ZDM7</accession>
<accession>A6KTC0</accession>
<gene>
    <name evidence="14" type="primary">Ddo</name>
    <name evidence="14" type="synonym">LOC100911156</name>
</gene>
<proteinExistence type="evidence at protein level"/>
<comment type="function">
    <text evidence="1 5 6 7 8 9">Selectively catalyzes the oxidative deamination of acidic amino acids (PubMed:1991137, PubMed:25747990, PubMed:29292239, PubMed:32376478). Suppresses the level of D-aspartate in the brain, an amino acid that can act as an agonist for glutamate receptors (By similarity). Protects the organism from the toxicity of D-amino acids (PubMed:7903300). May also function in the intestine (By similarity).</text>
</comment>
<comment type="catalytic activity">
    <reaction evidence="6 7 8">
        <text>D-aspartate + O2 + H2O = oxaloacetate + H2O2 + NH4(+)</text>
        <dbReference type="Rhea" id="RHEA:12512"/>
        <dbReference type="ChEBI" id="CHEBI:15377"/>
        <dbReference type="ChEBI" id="CHEBI:15379"/>
        <dbReference type="ChEBI" id="CHEBI:16240"/>
        <dbReference type="ChEBI" id="CHEBI:16452"/>
        <dbReference type="ChEBI" id="CHEBI:28938"/>
        <dbReference type="ChEBI" id="CHEBI:29990"/>
        <dbReference type="EC" id="1.4.3.1"/>
    </reaction>
    <physiologicalReaction direction="left-to-right" evidence="6 7 8">
        <dbReference type="Rhea" id="RHEA:12513"/>
    </physiologicalReaction>
</comment>
<comment type="catalytic activity">
    <reaction evidence="2">
        <text>D-glutamate + O2 + H2O = H2O2 + 2-oxoglutarate + NH4(+)</text>
        <dbReference type="Rhea" id="RHEA:10028"/>
        <dbReference type="ChEBI" id="CHEBI:15377"/>
        <dbReference type="ChEBI" id="CHEBI:15379"/>
        <dbReference type="ChEBI" id="CHEBI:16240"/>
        <dbReference type="ChEBI" id="CHEBI:16810"/>
        <dbReference type="ChEBI" id="CHEBI:28938"/>
        <dbReference type="ChEBI" id="CHEBI:29986"/>
    </reaction>
    <physiologicalReaction direction="left-to-right" evidence="2">
        <dbReference type="Rhea" id="RHEA:10029"/>
    </physiologicalReaction>
</comment>
<comment type="cofactor">
    <cofactor evidence="7 8">
        <name>FAD</name>
        <dbReference type="ChEBI" id="CHEBI:57692"/>
    </cofactor>
</comment>
<comment type="activity regulation">
    <text evidence="6 8">Inhibited by aminooxyacetic acid, malonate, meso-tartrate and potassium bromide.</text>
</comment>
<comment type="biophysicochemical properties">
    <kinetics>
        <KM evidence="6">2.26 mM for D-aspartate (at 37 degrees Celsius and at pH 8.3)</KM>
        <text evidence="6">kcat is 31.1 sec(-1) with D-aspartate as substrate (at 37 degrees Celsius and at pH 8.3).</text>
    </kinetics>
    <phDependence>
        <text evidence="7">Optimum pH is 8.3-12.5.</text>
    </phDependence>
    <temperatureDependence>
        <text evidence="7">Optimum temperature is 45 degrees Celsius.</text>
    </temperatureDependence>
</comment>
<comment type="subunit">
    <text evidence="2 7">Tetramer (PubMed:29292239). Interacts with PEX5; the interaction is direct and required for localization of DDO to the peroxisome (By similarity).</text>
</comment>
<comment type="subcellular location">
    <subcellularLocation>
        <location evidence="4 5">Peroxisome matrix</location>
    </subcellularLocation>
    <subcellularLocation>
        <location evidence="2">Cytoplasm</location>
        <location evidence="2">Cytosol</location>
    </subcellularLocation>
    <text evidence="2">Active in the peroxisomal matrix.</text>
</comment>
<comment type="tissue specificity">
    <text evidence="4 5">Expressed in liver and kidney (at protein level) (PubMed:1991137). In the brain, expressed in the frontal, temporal, and occipital lobes of the cortex, hippocampus, striatum, diencephalon, brainstem, cerebellum, spinal cord, plexus choroiderus and ependyma (at protein level) (PubMed:12209855, PubMed:1991137). Also expressed in the lung, muscle, heart, spleen, small intestine and testis (at protein level) (PubMed:1991137).</text>
</comment>
<comment type="developmental stage">
    <text evidence="9">In the liver and kidney, progressively increases during postnatal stages (at protein level).</text>
</comment>
<comment type="induction">
    <text evidence="9">Increased in pups born to mothers fed D-aspartate during pregnancy and suckling; not induced when mothers fed D-alanine.</text>
</comment>
<comment type="similarity">
    <text evidence="10">Belongs to the DAMOX/DASOX family.</text>
</comment>
<sequence length="341" mass="37543">MDTVRIAVVGAGVIGLSTAACVSQLVPRCSVTVISDRFTPDTTSNVAAGMLIPPTYPDTPVPTLKRWFRETFQHLSEIARSAEAVDAGIHLVSGWQIFRSVPTEEVPFWADVVLGFREMTEAELKRFPQYEFGQAFTTLKCETSAYLPWLEKRIKGSGGLLLTRRIEDLWELQPSFDIVVNCSGLGSRRLVGDATVSPVRGQVLQAQAPWVKHFIRDGGGLTYVYPGTSYVTLGGSRQTGDWNLSPDAELSREIFSRCCALEPSLHRACDIKEKVGLRPSRPGVRLQKEILVRGEQRLPVVHNYGHGSGGISVHWGSALEATRLVMECVHTLRTPASLSKL</sequence>
<reference evidence="11" key="1">
    <citation type="journal article" date="2015" name="Biol. Pharm. Bull.">
        <title>Characterization of the enzymatic and structural properties of human D-aspartate oxidase and comparison with those of the rat and mouse enzymes.</title>
        <authorList>
            <person name="Katane M."/>
            <person name="Kawata T."/>
            <person name="Nakayama K."/>
            <person name="Saitoh Y."/>
            <person name="Kaneko Y."/>
            <person name="Matsuda S."/>
            <person name="Saitoh Y."/>
            <person name="Miyamoto T."/>
            <person name="Sekine M."/>
            <person name="Homma H."/>
        </authorList>
    </citation>
    <scope>NUCLEOTIDE SEQUENCE [MRNA]</scope>
    <scope>FUNCTION</scope>
    <scope>CATALYTIC ACTIVITY</scope>
    <scope>ACTIVITY REGULATION</scope>
    <scope>BIOPHYSICOCHEMICAL PROPERTIES</scope>
</reference>
<reference evidence="13" key="2">
    <citation type="journal article" date="2004" name="Nature">
        <title>Genome sequence of the Brown Norway rat yields insights into mammalian evolution.</title>
        <authorList>
            <person name="Gibbs R.A."/>
            <person name="Weinstock G.M."/>
            <person name="Metzker M.L."/>
            <person name="Muzny D.M."/>
            <person name="Sodergren E.J."/>
            <person name="Scherer S."/>
            <person name="Scott G."/>
            <person name="Steffen D."/>
            <person name="Worley K.C."/>
            <person name="Burch P.E."/>
            <person name="Okwuonu G."/>
            <person name="Hines S."/>
            <person name="Lewis L."/>
            <person name="Deramo C."/>
            <person name="Delgado O."/>
            <person name="Dugan-Rocha S."/>
            <person name="Miner G."/>
            <person name="Morgan M."/>
            <person name="Hawes A."/>
            <person name="Gill R."/>
            <person name="Holt R.A."/>
            <person name="Adams M.D."/>
            <person name="Amanatides P.G."/>
            <person name="Baden-Tillson H."/>
            <person name="Barnstead M."/>
            <person name="Chin S."/>
            <person name="Evans C.A."/>
            <person name="Ferriera S."/>
            <person name="Fosler C."/>
            <person name="Glodek A."/>
            <person name="Gu Z."/>
            <person name="Jennings D."/>
            <person name="Kraft C.L."/>
            <person name="Nguyen T."/>
            <person name="Pfannkoch C.M."/>
            <person name="Sitter C."/>
            <person name="Sutton G.G."/>
            <person name="Venter J.C."/>
            <person name="Woodage T."/>
            <person name="Smith D."/>
            <person name="Lee H.-M."/>
            <person name="Gustafson E."/>
            <person name="Cahill P."/>
            <person name="Kana A."/>
            <person name="Doucette-Stamm L."/>
            <person name="Weinstock K."/>
            <person name="Fechtel K."/>
            <person name="Weiss R.B."/>
            <person name="Dunn D.M."/>
            <person name="Green E.D."/>
            <person name="Blakesley R.W."/>
            <person name="Bouffard G.G."/>
            <person name="De Jong P.J."/>
            <person name="Osoegawa K."/>
            <person name="Zhu B."/>
            <person name="Marra M."/>
            <person name="Schein J."/>
            <person name="Bosdet I."/>
            <person name="Fjell C."/>
            <person name="Jones S."/>
            <person name="Krzywinski M."/>
            <person name="Mathewson C."/>
            <person name="Siddiqui A."/>
            <person name="Wye N."/>
            <person name="McPherson J."/>
            <person name="Zhao S."/>
            <person name="Fraser C.M."/>
            <person name="Shetty J."/>
            <person name="Shatsman S."/>
            <person name="Geer K."/>
            <person name="Chen Y."/>
            <person name="Abramzon S."/>
            <person name="Nierman W.C."/>
            <person name="Havlak P.H."/>
            <person name="Chen R."/>
            <person name="Durbin K.J."/>
            <person name="Egan A."/>
            <person name="Ren Y."/>
            <person name="Song X.-Z."/>
            <person name="Li B."/>
            <person name="Liu Y."/>
            <person name="Qin X."/>
            <person name="Cawley S."/>
            <person name="Cooney A.J."/>
            <person name="D'Souza L.M."/>
            <person name="Martin K."/>
            <person name="Wu J.Q."/>
            <person name="Gonzalez-Garay M.L."/>
            <person name="Jackson A.R."/>
            <person name="Kalafus K.J."/>
            <person name="McLeod M.P."/>
            <person name="Milosavljevic A."/>
            <person name="Virk D."/>
            <person name="Volkov A."/>
            <person name="Wheeler D.A."/>
            <person name="Zhang Z."/>
            <person name="Bailey J.A."/>
            <person name="Eichler E.E."/>
            <person name="Tuzun E."/>
            <person name="Birney E."/>
            <person name="Mongin E."/>
            <person name="Ureta-Vidal A."/>
            <person name="Woodwark C."/>
            <person name="Zdobnov E."/>
            <person name="Bork P."/>
            <person name="Suyama M."/>
            <person name="Torrents D."/>
            <person name="Alexandersson M."/>
            <person name="Trask B.J."/>
            <person name="Young J.M."/>
            <person name="Huang H."/>
            <person name="Wang H."/>
            <person name="Xing H."/>
            <person name="Daniels S."/>
            <person name="Gietzen D."/>
            <person name="Schmidt J."/>
            <person name="Stevens K."/>
            <person name="Vitt U."/>
            <person name="Wingrove J."/>
            <person name="Camara F."/>
            <person name="Mar Alba M."/>
            <person name="Abril J.F."/>
            <person name="Guigo R."/>
            <person name="Smit A."/>
            <person name="Dubchak I."/>
            <person name="Rubin E.M."/>
            <person name="Couronne O."/>
            <person name="Poliakov A."/>
            <person name="Huebner N."/>
            <person name="Ganten D."/>
            <person name="Goesele C."/>
            <person name="Hummel O."/>
            <person name="Kreitler T."/>
            <person name="Lee Y.-A."/>
            <person name="Monti J."/>
            <person name="Schulz H."/>
            <person name="Zimdahl H."/>
            <person name="Himmelbauer H."/>
            <person name="Lehrach H."/>
            <person name="Jacob H.J."/>
            <person name="Bromberg S."/>
            <person name="Gullings-Handley J."/>
            <person name="Jensen-Seaman M.I."/>
            <person name="Kwitek A.E."/>
            <person name="Lazar J."/>
            <person name="Pasko D."/>
            <person name="Tonellato P.J."/>
            <person name="Twigger S."/>
            <person name="Ponting C.P."/>
            <person name="Duarte J.M."/>
            <person name="Rice S."/>
            <person name="Goodstadt L."/>
            <person name="Beatson S.A."/>
            <person name="Emes R.D."/>
            <person name="Winter E.E."/>
            <person name="Webber C."/>
            <person name="Brandt P."/>
            <person name="Nyakatura G."/>
            <person name="Adetobi M."/>
            <person name="Chiaromonte F."/>
            <person name="Elnitski L."/>
            <person name="Eswara P."/>
            <person name="Hardison R.C."/>
            <person name="Hou M."/>
            <person name="Kolbe D."/>
            <person name="Makova K."/>
            <person name="Miller W."/>
            <person name="Nekrutenko A."/>
            <person name="Riemer C."/>
            <person name="Schwartz S."/>
            <person name="Taylor J."/>
            <person name="Yang S."/>
            <person name="Zhang Y."/>
            <person name="Lindpaintner K."/>
            <person name="Andrews T.D."/>
            <person name="Caccamo M."/>
            <person name="Clamp M."/>
            <person name="Clarke L."/>
            <person name="Curwen V."/>
            <person name="Durbin R.M."/>
            <person name="Eyras E."/>
            <person name="Searle S.M."/>
            <person name="Cooper G.M."/>
            <person name="Batzoglou S."/>
            <person name="Brudno M."/>
            <person name="Sidow A."/>
            <person name="Stone E.A."/>
            <person name="Payseur B.A."/>
            <person name="Bourque G."/>
            <person name="Lopez-Otin C."/>
            <person name="Puente X.S."/>
            <person name="Chakrabarti K."/>
            <person name="Chatterji S."/>
            <person name="Dewey C."/>
            <person name="Pachter L."/>
            <person name="Bray N."/>
            <person name="Yap V.B."/>
            <person name="Caspi A."/>
            <person name="Tesler G."/>
            <person name="Pevzner P.A."/>
            <person name="Haussler D."/>
            <person name="Roskin K.M."/>
            <person name="Baertsch R."/>
            <person name="Clawson H."/>
            <person name="Furey T.S."/>
            <person name="Hinrichs A.S."/>
            <person name="Karolchik D."/>
            <person name="Kent W.J."/>
            <person name="Rosenbloom K.R."/>
            <person name="Trumbower H."/>
            <person name="Weirauch M."/>
            <person name="Cooper D.N."/>
            <person name="Stenson P.D."/>
            <person name="Ma B."/>
            <person name="Brent M."/>
            <person name="Arumugam M."/>
            <person name="Shteynberg D."/>
            <person name="Copley R.R."/>
            <person name="Taylor M.S."/>
            <person name="Riethman H."/>
            <person name="Mudunuri U."/>
            <person name="Peterson J."/>
            <person name="Guyer M."/>
            <person name="Felsenfeld A."/>
            <person name="Old S."/>
            <person name="Mockrin S."/>
            <person name="Collins F.S."/>
        </authorList>
    </citation>
    <scope>NUCLEOTIDE SEQUENCE [LARGE SCALE GENOMIC DNA]</scope>
    <source>
        <strain>Brown Norway</strain>
    </source>
</reference>
<reference evidence="12" key="3">
    <citation type="journal article" date="2005" name="Genome Res.">
        <title>Gene and alternative splicing annotation with AIR.</title>
        <authorList>
            <person name="Florea L."/>
            <person name="Di Francesco V."/>
            <person name="Miller J."/>
            <person name="Turner R."/>
            <person name="Yao A."/>
            <person name="Harris M."/>
            <person name="Walenz B."/>
            <person name="Mobarry C."/>
            <person name="Merkulov G.V."/>
            <person name="Charlab R."/>
            <person name="Dew I."/>
            <person name="Deng Z."/>
            <person name="Istrail S."/>
            <person name="Li P."/>
            <person name="Sutton G."/>
        </authorList>
    </citation>
    <scope>NUCLEOTIDE SEQUENCE [LARGE SCALE GENOMIC DNA]</scope>
    <source>
        <strain evidence="12">Brown Norway</strain>
    </source>
</reference>
<reference evidence="10" key="4">
    <citation type="journal article" date="1991" name="Biochim. Biophys. Acta">
        <title>D-aspartate oxidase, a peroxisomal enzyme in liver of rat and man.</title>
        <authorList>
            <person name="Van Veldhoven P.P."/>
            <person name="Brees C."/>
            <person name="Mannaerts G.P."/>
        </authorList>
    </citation>
    <scope>FUNCTION</scope>
    <scope>SUBCELLULAR LOCATION</scope>
    <scope>TISSUE SPECIFICITY</scope>
</reference>
<reference evidence="10" key="5">
    <citation type="journal article" date="1993" name="J. Biol. Chem.">
        <title>Biological role of D-amino acid oxidase and D-aspartate oxidase. Effects of D-amino acids.</title>
        <authorList>
            <person name="D'Aniello A."/>
            <person name="D'Onofrio G."/>
            <person name="Pischetola M."/>
            <person name="D'Aniello G."/>
            <person name="Vetere A."/>
            <person name="Petrucelli L."/>
            <person name="Fisher G.H."/>
        </authorList>
    </citation>
    <scope>FUNCTION</scope>
    <scope>DEVELOPMENTAL STAGE</scope>
    <scope>INDUCTION</scope>
</reference>
<reference evidence="10" key="6">
    <citation type="journal article" date="2002" name="J. Comp. Neurol.">
        <title>Cellular and subcellular distribution of D-aspartate oxidase in human and rat brain.</title>
        <authorList>
            <person name="Zaar K."/>
            <person name="Koest H.P."/>
            <person name="Schad A."/>
            <person name="Voelkl A."/>
            <person name="Baumgart E."/>
            <person name="Fahimi H.D."/>
        </authorList>
    </citation>
    <scope>SUBCELLULAR LOCATION</scope>
    <scope>TISSUE SPECIFICITY</scope>
</reference>
<reference evidence="15" key="7">
    <citation type="journal article" date="2012" name="Nat. Commun.">
        <title>Quantitative maps of protein phosphorylation sites across 14 different rat organs and tissues.</title>
        <authorList>
            <person name="Lundby A."/>
            <person name="Secher A."/>
            <person name="Lage K."/>
            <person name="Nordsborg N.B."/>
            <person name="Dmytriyev A."/>
            <person name="Lundby C."/>
            <person name="Olsen J.V."/>
        </authorList>
    </citation>
    <scope>IDENTIFICATION BY MASS SPECTROMETRY [LARGE SCALE ANALYSIS]</scope>
</reference>
<reference evidence="10" key="8">
    <citation type="journal article" date="2018" name="Biochim. Biophys. Acta">
        <title>Rat d-aspartate oxidase is more similar to the human enzyme than the mouse enzyme.</title>
        <authorList>
            <person name="Katane M."/>
            <person name="Kuwabara H."/>
            <person name="Nakayama K."/>
            <person name="Saitoh Y."/>
            <person name="Miyamoto T."/>
            <person name="Sekine M."/>
            <person name="Homma H."/>
        </authorList>
    </citation>
    <scope>FUNCTION</scope>
    <scope>CATALYTIC ACTIVITY</scope>
    <scope>COFACTOR</scope>
    <scope>BIOPHYSICOCHEMICAL PROPERTIES</scope>
    <scope>SUBUNIT</scope>
</reference>
<reference evidence="10" key="9">
    <citation type="journal article" date="2020" name="Biochim. Biophys. Acta">
        <title>Biochemical characterization of d-aspartate oxidase from Caenorhabditis elegans: its potential use in the determination of free d-glutamate in biological samples.</title>
        <authorList>
            <person name="Katane M."/>
            <person name="Kuwabara H."/>
            <person name="Nakayama K."/>
            <person name="Saitoh Y."/>
            <person name="Miyamoto T."/>
            <person name="Sekine M."/>
            <person name="Homma H."/>
        </authorList>
    </citation>
    <scope>FUNCTION</scope>
    <scope>CATALYTIC ACTIVITY</scope>
    <scope>COFACTOR</scope>
    <scope>ACTIVITY REGULATION</scope>
</reference>
<organism evidence="13">
    <name type="scientific">Rattus norvegicus</name>
    <name type="common">Rat</name>
    <dbReference type="NCBI Taxonomy" id="10116"/>
    <lineage>
        <taxon>Eukaryota</taxon>
        <taxon>Metazoa</taxon>
        <taxon>Chordata</taxon>
        <taxon>Craniata</taxon>
        <taxon>Vertebrata</taxon>
        <taxon>Euteleostomi</taxon>
        <taxon>Mammalia</taxon>
        <taxon>Eutheria</taxon>
        <taxon>Euarchontoglires</taxon>
        <taxon>Glires</taxon>
        <taxon>Rodentia</taxon>
        <taxon>Myomorpha</taxon>
        <taxon>Muroidea</taxon>
        <taxon>Muridae</taxon>
        <taxon>Murinae</taxon>
        <taxon>Rattus</taxon>
    </lineage>
</organism>
<name>OXDD_RAT</name>
<feature type="chain" id="PRO_0000459787" description="D-aspartate oxidase">
    <location>
        <begin position="1"/>
        <end position="341"/>
    </location>
</feature>
<feature type="short sequence motif" description="Microbody targeting signal" evidence="3">
    <location>
        <begin position="339"/>
        <end position="341"/>
    </location>
</feature>
<feature type="binding site" evidence="2">
    <location>
        <position position="36"/>
    </location>
    <ligand>
        <name>FAD</name>
        <dbReference type="ChEBI" id="CHEBI:57692"/>
    </ligand>
</feature>
<feature type="binding site" evidence="2">
    <location>
        <position position="37"/>
    </location>
    <ligand>
        <name>FAD</name>
        <dbReference type="ChEBI" id="CHEBI:57692"/>
    </ligand>
</feature>
<feature type="binding site" evidence="2">
    <location>
        <position position="43"/>
    </location>
    <ligand>
        <name>FAD</name>
        <dbReference type="ChEBI" id="CHEBI:57692"/>
    </ligand>
</feature>
<feature type="binding site" evidence="2">
    <location>
        <position position="44"/>
    </location>
    <ligand>
        <name>FAD</name>
        <dbReference type="ChEBI" id="CHEBI:57692"/>
    </ligand>
</feature>
<feature type="binding site" evidence="2">
    <location>
        <position position="50"/>
    </location>
    <ligand>
        <name>FAD</name>
        <dbReference type="ChEBI" id="CHEBI:57692"/>
    </ligand>
</feature>
<feature type="binding site" evidence="2">
    <location>
        <position position="307"/>
    </location>
    <ligand>
        <name>FAD</name>
        <dbReference type="ChEBI" id="CHEBI:57692"/>
    </ligand>
</feature>
<feature type="binding site" evidence="2">
    <location>
        <position position="311"/>
    </location>
    <ligand>
        <name>FAD</name>
        <dbReference type="ChEBI" id="CHEBI:57692"/>
    </ligand>
</feature>
<feature type="binding site" evidence="2">
    <location>
        <position position="312"/>
    </location>
    <ligand>
        <name>FAD</name>
        <dbReference type="ChEBI" id="CHEBI:57692"/>
    </ligand>
</feature>
<keyword id="KW-0963">Cytoplasm</keyword>
<keyword id="KW-0274">FAD</keyword>
<keyword id="KW-0285">Flavoprotein</keyword>
<keyword id="KW-0560">Oxidoreductase</keyword>
<keyword id="KW-0576">Peroxisome</keyword>
<keyword id="KW-1185">Reference proteome</keyword>
<evidence type="ECO:0000250" key="1">
    <source>
        <dbReference type="UniProtKB" id="Q922Z0"/>
    </source>
</evidence>
<evidence type="ECO:0000250" key="2">
    <source>
        <dbReference type="UniProtKB" id="Q99489"/>
    </source>
</evidence>
<evidence type="ECO:0000255" key="3"/>
<evidence type="ECO:0000269" key="4">
    <source>
    </source>
</evidence>
<evidence type="ECO:0000269" key="5">
    <source>
    </source>
</evidence>
<evidence type="ECO:0000269" key="6">
    <source>
    </source>
</evidence>
<evidence type="ECO:0000269" key="7">
    <source>
    </source>
</evidence>
<evidence type="ECO:0000269" key="8">
    <source>
    </source>
</evidence>
<evidence type="ECO:0000269" key="9">
    <source>
    </source>
</evidence>
<evidence type="ECO:0000305" key="10"/>
<evidence type="ECO:0000312" key="11">
    <source>
        <dbReference type="EMBL" id="BAP34602.1"/>
    </source>
</evidence>
<evidence type="ECO:0000312" key="12">
    <source>
        <dbReference type="EMBL" id="EDL83239.1"/>
    </source>
</evidence>
<evidence type="ECO:0000312" key="13">
    <source>
        <dbReference type="Proteomes" id="UP000002494"/>
    </source>
</evidence>
<evidence type="ECO:0000312" key="14">
    <source>
        <dbReference type="RGD" id="1595123"/>
    </source>
</evidence>
<evidence type="ECO:0007744" key="15">
    <source>
    </source>
</evidence>
<dbReference type="EC" id="1.4.3.1" evidence="6 7 8"/>
<dbReference type="EMBL" id="AB983592">
    <property type="protein sequence ID" value="BAP34602.1"/>
    <property type="molecule type" value="mRNA"/>
</dbReference>
<dbReference type="EMBL" id="CH474119">
    <property type="protein sequence ID" value="EDL83239.1"/>
    <property type="molecule type" value="Genomic_DNA"/>
</dbReference>
<dbReference type="RefSeq" id="NP_001102935.1">
    <property type="nucleotide sequence ID" value="NM_001109465.2"/>
</dbReference>
<dbReference type="SMR" id="D3ZDM7"/>
<dbReference type="FunCoup" id="D3ZDM7">
    <property type="interactions" value="318"/>
</dbReference>
<dbReference type="STRING" id="10116.ENSRNOP00000000710"/>
<dbReference type="BindingDB" id="D3ZDM7"/>
<dbReference type="ChEMBL" id="CHEMBL3616356"/>
<dbReference type="iPTMnet" id="D3ZDM7"/>
<dbReference type="PhosphoSitePlus" id="D3ZDM7"/>
<dbReference type="PaxDb" id="10116-ENSRNOP00000000710"/>
<dbReference type="PeptideAtlas" id="D3ZDM7"/>
<dbReference type="Ensembl" id="ENSRNOT00000000710.6">
    <property type="protein sequence ID" value="ENSRNOP00000000710.3"/>
    <property type="gene ID" value="ENSRNOG00000000582.8"/>
</dbReference>
<dbReference type="GeneID" id="685325"/>
<dbReference type="KEGG" id="rno:685325"/>
<dbReference type="AGR" id="RGD:1595123"/>
<dbReference type="CTD" id="8528"/>
<dbReference type="RGD" id="1595123">
    <property type="gene designation" value="Ddo"/>
</dbReference>
<dbReference type="eggNOG" id="KOG3923">
    <property type="taxonomic scope" value="Eukaryota"/>
</dbReference>
<dbReference type="GeneTree" id="ENSGT00390000018635"/>
<dbReference type="HOGENOM" id="CLU_034311_0_2_1"/>
<dbReference type="OMA" id="DLWELQP"/>
<dbReference type="OrthoDB" id="2015447at2759"/>
<dbReference type="TreeFam" id="TF313887"/>
<dbReference type="BRENDA" id="1.4.3.1">
    <property type="organism ID" value="5301"/>
</dbReference>
<dbReference type="Reactome" id="R-RNO-389661">
    <property type="pathway name" value="Glyoxylate metabolism and glycine degradation"/>
</dbReference>
<dbReference type="Reactome" id="R-RNO-9033241">
    <property type="pathway name" value="Peroxisomal protein import"/>
</dbReference>
<dbReference type="Proteomes" id="UP000002494">
    <property type="component" value="Chromosome 20"/>
</dbReference>
<dbReference type="Proteomes" id="UP000234681">
    <property type="component" value="Chromosome 20"/>
</dbReference>
<dbReference type="Bgee" id="ENSRNOG00000000582">
    <property type="expression patterns" value="Expressed in adult mammalian kidney and 15 other cell types or tissues"/>
</dbReference>
<dbReference type="GO" id="GO:0005737">
    <property type="term" value="C:cytoplasm"/>
    <property type="evidence" value="ECO:0000318"/>
    <property type="project" value="GO_Central"/>
</dbReference>
<dbReference type="GO" id="GO:0005829">
    <property type="term" value="C:cytosol"/>
    <property type="evidence" value="ECO:0000266"/>
    <property type="project" value="RGD"/>
</dbReference>
<dbReference type="GO" id="GO:0005782">
    <property type="term" value="C:peroxisomal matrix"/>
    <property type="evidence" value="ECO:0000250"/>
    <property type="project" value="UniProtKB"/>
</dbReference>
<dbReference type="GO" id="GO:0005777">
    <property type="term" value="C:peroxisome"/>
    <property type="evidence" value="ECO:0000314"/>
    <property type="project" value="UniProtKB"/>
</dbReference>
<dbReference type="GO" id="GO:0008445">
    <property type="term" value="F:D-aspartate oxidase activity"/>
    <property type="evidence" value="ECO:0000314"/>
    <property type="project" value="UniProtKB"/>
</dbReference>
<dbReference type="GO" id="GO:0071949">
    <property type="term" value="F:FAD binding"/>
    <property type="evidence" value="ECO:0000314"/>
    <property type="project" value="UniProtKB"/>
</dbReference>
<dbReference type="GO" id="GO:0006531">
    <property type="term" value="P:aspartate metabolic process"/>
    <property type="evidence" value="ECO:0000266"/>
    <property type="project" value="RGD"/>
</dbReference>
<dbReference type="GO" id="GO:0019478">
    <property type="term" value="P:D-amino acid catabolic process"/>
    <property type="evidence" value="ECO:0000314"/>
    <property type="project" value="UniProtKB"/>
</dbReference>
<dbReference type="GO" id="GO:0007625">
    <property type="term" value="P:grooming behavior"/>
    <property type="evidence" value="ECO:0000266"/>
    <property type="project" value="RGD"/>
</dbReference>
<dbReference type="GO" id="GO:0042445">
    <property type="term" value="P:hormone metabolic process"/>
    <property type="evidence" value="ECO:0000266"/>
    <property type="project" value="RGD"/>
</dbReference>
<dbReference type="GO" id="GO:0007320">
    <property type="term" value="P:insemination"/>
    <property type="evidence" value="ECO:0000266"/>
    <property type="project" value="RGD"/>
</dbReference>
<dbReference type="GO" id="GO:0050877">
    <property type="term" value="P:nervous system process"/>
    <property type="evidence" value="ECO:0000266"/>
    <property type="project" value="RGD"/>
</dbReference>
<dbReference type="GO" id="GO:0010646">
    <property type="term" value="P:regulation of cell communication"/>
    <property type="evidence" value="ECO:0000266"/>
    <property type="project" value="RGD"/>
</dbReference>
<dbReference type="FunFam" id="3.40.50.720:FF:000551">
    <property type="entry name" value="D-aspartate oxidase"/>
    <property type="match status" value="1"/>
</dbReference>
<dbReference type="Gene3D" id="3.30.9.10">
    <property type="entry name" value="D-Amino Acid Oxidase, subunit A, domain 2"/>
    <property type="match status" value="1"/>
</dbReference>
<dbReference type="Gene3D" id="3.40.50.720">
    <property type="entry name" value="NAD(P)-binding Rossmann-like Domain"/>
    <property type="match status" value="1"/>
</dbReference>
<dbReference type="InterPro" id="IPR006181">
    <property type="entry name" value="D-amino_acid_oxidase_CS"/>
</dbReference>
<dbReference type="InterPro" id="IPR023209">
    <property type="entry name" value="DAO"/>
</dbReference>
<dbReference type="InterPro" id="IPR006076">
    <property type="entry name" value="FAD-dep_OxRdtase"/>
</dbReference>
<dbReference type="PANTHER" id="PTHR11530">
    <property type="entry name" value="D-AMINO ACID OXIDASE"/>
    <property type="match status" value="1"/>
</dbReference>
<dbReference type="PANTHER" id="PTHR11530:SF11">
    <property type="entry name" value="D-ASPARTATE OXIDASE"/>
    <property type="match status" value="1"/>
</dbReference>
<dbReference type="Pfam" id="PF01266">
    <property type="entry name" value="DAO"/>
    <property type="match status" value="1"/>
</dbReference>
<dbReference type="PIRSF" id="PIRSF000189">
    <property type="entry name" value="D-aa_oxidase"/>
    <property type="match status" value="1"/>
</dbReference>
<dbReference type="SUPFAM" id="SSF54373">
    <property type="entry name" value="FAD-linked reductases, C-terminal domain"/>
    <property type="match status" value="1"/>
</dbReference>
<dbReference type="SUPFAM" id="SSF51971">
    <property type="entry name" value="Nucleotide-binding domain"/>
    <property type="match status" value="1"/>
</dbReference>
<dbReference type="PROSITE" id="PS00677">
    <property type="entry name" value="DAO"/>
    <property type="match status" value="1"/>
</dbReference>
<dbReference type="PROSITE" id="PS51257">
    <property type="entry name" value="PROKAR_LIPOPROTEIN"/>
    <property type="match status" value="1"/>
</dbReference>
<protein>
    <recommendedName>
        <fullName>D-aspartate oxidase</fullName>
        <shortName evidence="10">DASOX</shortName>
        <shortName evidence="2">DASPO</shortName>
        <shortName evidence="10">DDO</shortName>
        <ecNumber evidence="6 7 8">1.4.3.1</ecNumber>
    </recommendedName>
</protein>